<name>RS16_NEUCR</name>
<dbReference type="EMBL" id="CM002236">
    <property type="protein sequence ID" value="EAA35592.1"/>
    <property type="molecule type" value="Genomic_DNA"/>
</dbReference>
<dbReference type="RefSeq" id="XP_964828.1">
    <property type="nucleotide sequence ID" value="XM_959735.3"/>
</dbReference>
<dbReference type="PDB" id="7R81">
    <property type="method" value="EM"/>
    <property type="resolution" value="2.70 A"/>
    <property type="chains" value="R2=1-142"/>
</dbReference>
<dbReference type="PDBsum" id="7R81"/>
<dbReference type="EMDB" id="EMD-24307"/>
<dbReference type="SMR" id="Q7SFJ9"/>
<dbReference type="FunCoup" id="Q7SFJ9">
    <property type="interactions" value="728"/>
</dbReference>
<dbReference type="STRING" id="367110.Q7SFJ9"/>
<dbReference type="PaxDb" id="5141-EFNCRP00000008669"/>
<dbReference type="EnsemblFungi" id="EAA35592">
    <property type="protein sequence ID" value="EAA35592"/>
    <property type="gene ID" value="NCU08620"/>
</dbReference>
<dbReference type="GeneID" id="3880988"/>
<dbReference type="KEGG" id="ncr:NCU08620"/>
<dbReference type="VEuPathDB" id="FungiDB:NCU08620"/>
<dbReference type="HOGENOM" id="CLU_046483_4_0_1"/>
<dbReference type="InParanoid" id="Q7SFJ9"/>
<dbReference type="OMA" id="WPIEMAR"/>
<dbReference type="OrthoDB" id="426865at2759"/>
<dbReference type="Proteomes" id="UP000001805">
    <property type="component" value="Chromosome 1, Linkage Group I"/>
</dbReference>
<dbReference type="GO" id="GO:0022627">
    <property type="term" value="C:cytosolic small ribosomal subunit"/>
    <property type="evidence" value="ECO:0000318"/>
    <property type="project" value="GO_Central"/>
</dbReference>
<dbReference type="GO" id="GO:0003723">
    <property type="term" value="F:RNA binding"/>
    <property type="evidence" value="ECO:0000318"/>
    <property type="project" value="GO_Central"/>
</dbReference>
<dbReference type="GO" id="GO:0003735">
    <property type="term" value="F:structural constituent of ribosome"/>
    <property type="evidence" value="ECO:0000318"/>
    <property type="project" value="GO_Central"/>
</dbReference>
<dbReference type="GO" id="GO:0000462">
    <property type="term" value="P:maturation of SSU-rRNA from tricistronic rRNA transcript (SSU-rRNA, 5.8S rRNA, LSU-rRNA)"/>
    <property type="evidence" value="ECO:0000318"/>
    <property type="project" value="GO_Central"/>
</dbReference>
<dbReference type="GO" id="GO:0006412">
    <property type="term" value="P:translation"/>
    <property type="evidence" value="ECO:0007669"/>
    <property type="project" value="InterPro"/>
</dbReference>
<dbReference type="FunFam" id="3.30.230.10:FF:000007">
    <property type="entry name" value="40S ribosomal protein S16"/>
    <property type="match status" value="1"/>
</dbReference>
<dbReference type="Gene3D" id="3.30.230.10">
    <property type="match status" value="1"/>
</dbReference>
<dbReference type="InterPro" id="IPR020568">
    <property type="entry name" value="Ribosomal_Su5_D2-typ_SF"/>
</dbReference>
<dbReference type="InterPro" id="IPR000754">
    <property type="entry name" value="Ribosomal_uS9"/>
</dbReference>
<dbReference type="InterPro" id="IPR020574">
    <property type="entry name" value="Ribosomal_uS9_CS"/>
</dbReference>
<dbReference type="InterPro" id="IPR014721">
    <property type="entry name" value="Ribsml_uS5_D2-typ_fold_subgr"/>
</dbReference>
<dbReference type="NCBIfam" id="NF001749">
    <property type="entry name" value="PRK00474.1"/>
    <property type="match status" value="1"/>
</dbReference>
<dbReference type="PANTHER" id="PTHR21569:SF16">
    <property type="entry name" value="RIBOSOMAL PROTEIN S16"/>
    <property type="match status" value="1"/>
</dbReference>
<dbReference type="PANTHER" id="PTHR21569">
    <property type="entry name" value="RIBOSOMAL PROTEIN S9"/>
    <property type="match status" value="1"/>
</dbReference>
<dbReference type="Pfam" id="PF00380">
    <property type="entry name" value="Ribosomal_S9"/>
    <property type="match status" value="1"/>
</dbReference>
<dbReference type="SUPFAM" id="SSF54211">
    <property type="entry name" value="Ribosomal protein S5 domain 2-like"/>
    <property type="match status" value="1"/>
</dbReference>
<dbReference type="PROSITE" id="PS00360">
    <property type="entry name" value="RIBOSOMAL_S9"/>
    <property type="match status" value="1"/>
</dbReference>
<reference key="1">
    <citation type="journal article" date="2003" name="Nature">
        <title>The genome sequence of the filamentous fungus Neurospora crassa.</title>
        <authorList>
            <person name="Galagan J.E."/>
            <person name="Calvo S.E."/>
            <person name="Borkovich K.A."/>
            <person name="Selker E.U."/>
            <person name="Read N.D."/>
            <person name="Jaffe D.B."/>
            <person name="FitzHugh W."/>
            <person name="Ma L.-J."/>
            <person name="Smirnov S."/>
            <person name="Purcell S."/>
            <person name="Rehman B."/>
            <person name="Elkins T."/>
            <person name="Engels R."/>
            <person name="Wang S."/>
            <person name="Nielsen C.B."/>
            <person name="Butler J."/>
            <person name="Endrizzi M."/>
            <person name="Qui D."/>
            <person name="Ianakiev P."/>
            <person name="Bell-Pedersen D."/>
            <person name="Nelson M.A."/>
            <person name="Werner-Washburne M."/>
            <person name="Selitrennikoff C.P."/>
            <person name="Kinsey J.A."/>
            <person name="Braun E.L."/>
            <person name="Zelter A."/>
            <person name="Schulte U."/>
            <person name="Kothe G.O."/>
            <person name="Jedd G."/>
            <person name="Mewes H.-W."/>
            <person name="Staben C."/>
            <person name="Marcotte E."/>
            <person name="Greenberg D."/>
            <person name="Roy A."/>
            <person name="Foley K."/>
            <person name="Naylor J."/>
            <person name="Stange-Thomann N."/>
            <person name="Barrett R."/>
            <person name="Gnerre S."/>
            <person name="Kamal M."/>
            <person name="Kamvysselis M."/>
            <person name="Mauceli E.W."/>
            <person name="Bielke C."/>
            <person name="Rudd S."/>
            <person name="Frishman D."/>
            <person name="Krystofova S."/>
            <person name="Rasmussen C."/>
            <person name="Metzenberg R.L."/>
            <person name="Perkins D.D."/>
            <person name="Kroken S."/>
            <person name="Cogoni C."/>
            <person name="Macino G."/>
            <person name="Catcheside D.E.A."/>
            <person name="Li W."/>
            <person name="Pratt R.J."/>
            <person name="Osmani S.A."/>
            <person name="DeSouza C.P.C."/>
            <person name="Glass N.L."/>
            <person name="Orbach M.J."/>
            <person name="Berglund J.A."/>
            <person name="Voelker R."/>
            <person name="Yarden O."/>
            <person name="Plamann M."/>
            <person name="Seiler S."/>
            <person name="Dunlap J.C."/>
            <person name="Radford A."/>
            <person name="Aramayo R."/>
            <person name="Natvig D.O."/>
            <person name="Alex L.A."/>
            <person name="Mannhaupt G."/>
            <person name="Ebbole D.J."/>
            <person name="Freitag M."/>
            <person name="Paulsen I."/>
            <person name="Sachs M.S."/>
            <person name="Lander E.S."/>
            <person name="Nusbaum C."/>
            <person name="Birren B.W."/>
        </authorList>
    </citation>
    <scope>NUCLEOTIDE SEQUENCE [LARGE SCALE GENOMIC DNA]</scope>
    <source>
        <strain>ATCC 24698 / 74-OR23-1A / CBS 708.71 / DSM 1257 / FGSC 987</strain>
    </source>
</reference>
<reference key="2">
    <citation type="journal article" date="2021" name="Proc. Natl. Acad. Sci. U.S.A.">
        <title>Structure of the translating Neurospora ribosome arrested by cycloheximide.</title>
        <authorList>
            <person name="Shen L."/>
            <person name="Su Z."/>
            <person name="Yang K."/>
            <person name="Wu C."/>
            <person name="Becker T."/>
            <person name="Bell-Pedersen D."/>
            <person name="Zhang J."/>
            <person name="Sachs M.S."/>
        </authorList>
    </citation>
    <scope>STRUCTURE BY ELECTRON MICROSCOPY (2.70 ANGSTROMS)</scope>
</reference>
<accession>Q7SFJ9</accession>
<evidence type="ECO:0000269" key="1">
    <source>
    </source>
</evidence>
<evidence type="ECO:0000303" key="2">
    <source>
    </source>
</evidence>
<evidence type="ECO:0000305" key="3"/>
<evidence type="ECO:0000305" key="4">
    <source>
    </source>
</evidence>
<sequence>MATQAVQVFGKKKNATAVARCVQGKGLIKVNGVPLKLYAPEILRAKLYEPILLLGTDKFAEVDIRLKVSGGGHVSQVYAVRQAIAKAIVAYYAKYVDEHSKNTLKTALIQFDRTLLVADPRRCEPKKFGGKGARSRFQKSYR</sequence>
<comment type="function">
    <text evidence="4">Component of the ribosome, a large ribonucleoprotein complex responsible for the synthesis of proteins in the cell. The small ribosomal subunit (SSU) binds messenger RNAs (mRNAs) and translates the encoded message by selecting cognate aminoacyl-transfer RNA (tRNA) molecules. The large subunit (LSU) contains the ribosomal catalytic site termed the peptidyl transferase center (PTC), which catalyzes the formation of peptide bonds, thereby polymerizing the amino acids delivered by tRNAs into a polypeptide chain. The nascent polypeptides leave the ribosome through a tunnel in the LSU and interact with protein factors that function in enzymatic processing, targeting, and the membrane insertion of nascent chains at the exit of the ribosomal tunnel.</text>
</comment>
<comment type="subunit">
    <text evidence="1">Component of the small ribosomal subunit (SSU). Mature N.crassa ribosomes consist of a small (40S) and a large (60S) subunit. The 40S small subunit contains 1 molecule of ribosomal RNA (18S rRNA) and at least 32 different proteins. The large 60S subunit contains 3 rRNA molecules (26S, 5.8S and 5S rRNA) and at least 42 different proteins.</text>
</comment>
<comment type="subcellular location">
    <subcellularLocation>
        <location evidence="1">Cytoplasm</location>
    </subcellularLocation>
</comment>
<comment type="similarity">
    <text evidence="3">Belongs to the universal ribosomal protein uS9 family.</text>
</comment>
<protein>
    <recommendedName>
        <fullName evidence="2">Small ribosomal subunit protein uS9</fullName>
    </recommendedName>
    <alternativeName>
        <fullName>40S ribosomal protein S16</fullName>
    </alternativeName>
</protein>
<proteinExistence type="evidence at protein level"/>
<keyword id="KW-0002">3D-structure</keyword>
<keyword id="KW-0963">Cytoplasm</keyword>
<keyword id="KW-1185">Reference proteome</keyword>
<keyword id="KW-0687">Ribonucleoprotein</keyword>
<keyword id="KW-0689">Ribosomal protein</keyword>
<feature type="chain" id="PRO_0000111500" description="Small ribosomal subunit protein uS9">
    <location>
        <begin position="1"/>
        <end position="142"/>
    </location>
</feature>
<gene>
    <name type="primary">rps-16</name>
    <name type="ORF">NCU08620</name>
</gene>
<organism>
    <name type="scientific">Neurospora crassa (strain ATCC 24698 / 74-OR23-1A / CBS 708.71 / DSM 1257 / FGSC 987)</name>
    <dbReference type="NCBI Taxonomy" id="367110"/>
    <lineage>
        <taxon>Eukaryota</taxon>
        <taxon>Fungi</taxon>
        <taxon>Dikarya</taxon>
        <taxon>Ascomycota</taxon>
        <taxon>Pezizomycotina</taxon>
        <taxon>Sordariomycetes</taxon>
        <taxon>Sordariomycetidae</taxon>
        <taxon>Sordariales</taxon>
        <taxon>Sordariaceae</taxon>
        <taxon>Neurospora</taxon>
    </lineage>
</organism>